<name>E4PD_SHIB3</name>
<reference key="1">
    <citation type="submission" date="2008-05" db="EMBL/GenBank/DDBJ databases">
        <title>Complete sequence of Shigella boydii serotype 18 strain BS512.</title>
        <authorList>
            <person name="Rasko D.A."/>
            <person name="Rosovitz M."/>
            <person name="Maurelli A.T."/>
            <person name="Myers G."/>
            <person name="Seshadri R."/>
            <person name="Cer R."/>
            <person name="Jiang L."/>
            <person name="Ravel J."/>
            <person name="Sebastian Y."/>
        </authorList>
    </citation>
    <scope>NUCLEOTIDE SEQUENCE [LARGE SCALE GENOMIC DNA]</scope>
    <source>
        <strain>CDC 3083-94 / BS512</strain>
    </source>
</reference>
<evidence type="ECO:0000255" key="1">
    <source>
        <dbReference type="HAMAP-Rule" id="MF_01640"/>
    </source>
</evidence>
<protein>
    <recommendedName>
        <fullName evidence="1">D-erythrose-4-phosphate dehydrogenase</fullName>
        <shortName evidence="1">E4PDH</shortName>
        <ecNumber evidence="1">1.2.1.72</ecNumber>
    </recommendedName>
</protein>
<organism>
    <name type="scientific">Shigella boydii serotype 18 (strain CDC 3083-94 / BS512)</name>
    <dbReference type="NCBI Taxonomy" id="344609"/>
    <lineage>
        <taxon>Bacteria</taxon>
        <taxon>Pseudomonadati</taxon>
        <taxon>Pseudomonadota</taxon>
        <taxon>Gammaproteobacteria</taxon>
        <taxon>Enterobacterales</taxon>
        <taxon>Enterobacteriaceae</taxon>
        <taxon>Shigella</taxon>
    </lineage>
</organism>
<comment type="function">
    <text evidence="1">Catalyzes the NAD-dependent conversion of D-erythrose 4-phosphate to 4-phosphoerythronate.</text>
</comment>
<comment type="catalytic activity">
    <reaction evidence="1">
        <text>D-erythrose 4-phosphate + NAD(+) + H2O = 4-phospho-D-erythronate + NADH + 2 H(+)</text>
        <dbReference type="Rhea" id="RHEA:12056"/>
        <dbReference type="ChEBI" id="CHEBI:15377"/>
        <dbReference type="ChEBI" id="CHEBI:15378"/>
        <dbReference type="ChEBI" id="CHEBI:16897"/>
        <dbReference type="ChEBI" id="CHEBI:57540"/>
        <dbReference type="ChEBI" id="CHEBI:57945"/>
        <dbReference type="ChEBI" id="CHEBI:58766"/>
        <dbReference type="EC" id="1.2.1.72"/>
    </reaction>
</comment>
<comment type="pathway">
    <text evidence="1">Cofactor biosynthesis; pyridoxine 5'-phosphate biosynthesis; pyridoxine 5'-phosphate from D-erythrose 4-phosphate: step 1/5.</text>
</comment>
<comment type="subunit">
    <text evidence="1">Homotetramer.</text>
</comment>
<comment type="subcellular location">
    <subcellularLocation>
        <location evidence="1">Cytoplasm</location>
    </subcellularLocation>
</comment>
<comment type="similarity">
    <text evidence="1">Belongs to the glyceraldehyde-3-phosphate dehydrogenase family. Epd subfamily.</text>
</comment>
<sequence length="339" mass="37299">MTVRVAINGFGRIGRNVVRALYESGRRAEITVVAINELADAAGMAHLLKYDTSHGRFAWEVRQERDQLFVGDDAIRVLHERSLQSLPWRELGVDVVLDCTGVYGSREHGEAHIAAGAKKVLFSHPGSNDLDATVVYGVNQDQLRAEHRIVSNASCTTNCIIPVIKLLDDAYGIESGTVTTIHSAMHDQQVIDAYHPDLRRTRAASQSIIPVDTKLAAGITRFFPQFNDRFEAIAVRVPTINVTAIDLSVTVKKPVKANEVNLLLQKAAQGAFHGIVDYTELPLVSVDFNHDPHSAIVDGTQTRVSGAHLIKTLVWCDNEWGFANRMLDTTLAMATVAFR</sequence>
<feature type="chain" id="PRO_1000186843" description="D-erythrose-4-phosphate dehydrogenase">
    <location>
        <begin position="1"/>
        <end position="339"/>
    </location>
</feature>
<feature type="active site" description="Nucleophile" evidence="1">
    <location>
        <position position="155"/>
    </location>
</feature>
<feature type="binding site" evidence="1">
    <location>
        <begin position="12"/>
        <end position="13"/>
    </location>
    <ligand>
        <name>NAD(+)</name>
        <dbReference type="ChEBI" id="CHEBI:57540"/>
    </ligand>
</feature>
<feature type="binding site" evidence="1">
    <location>
        <position position="81"/>
    </location>
    <ligand>
        <name>NAD(+)</name>
        <dbReference type="ChEBI" id="CHEBI:57540"/>
    </ligand>
</feature>
<feature type="binding site" evidence="1">
    <location>
        <begin position="154"/>
        <end position="156"/>
    </location>
    <ligand>
        <name>substrate</name>
    </ligand>
</feature>
<feature type="binding site" evidence="1">
    <location>
        <position position="200"/>
    </location>
    <ligand>
        <name>substrate</name>
    </ligand>
</feature>
<feature type="binding site" evidence="1">
    <location>
        <begin position="213"/>
        <end position="214"/>
    </location>
    <ligand>
        <name>substrate</name>
    </ligand>
</feature>
<feature type="binding site" evidence="1">
    <location>
        <position position="236"/>
    </location>
    <ligand>
        <name>substrate</name>
    </ligand>
</feature>
<feature type="binding site" evidence="1">
    <location>
        <position position="318"/>
    </location>
    <ligand>
        <name>NAD(+)</name>
        <dbReference type="ChEBI" id="CHEBI:57540"/>
    </ligand>
</feature>
<feature type="site" description="Activates thiol group during catalysis" evidence="1">
    <location>
        <position position="182"/>
    </location>
</feature>
<gene>
    <name evidence="1" type="primary">epd</name>
    <name type="ordered locus">SbBS512_E3352</name>
</gene>
<keyword id="KW-0963">Cytoplasm</keyword>
<keyword id="KW-0520">NAD</keyword>
<keyword id="KW-0560">Oxidoreductase</keyword>
<keyword id="KW-0664">Pyridoxine biosynthesis</keyword>
<keyword id="KW-1185">Reference proteome</keyword>
<dbReference type="EC" id="1.2.1.72" evidence="1"/>
<dbReference type="EMBL" id="CP001063">
    <property type="protein sequence ID" value="ACD06426.1"/>
    <property type="molecule type" value="Genomic_DNA"/>
</dbReference>
<dbReference type="RefSeq" id="WP_000218480.1">
    <property type="nucleotide sequence ID" value="NC_010658.1"/>
</dbReference>
<dbReference type="SMR" id="B2U0U3"/>
<dbReference type="STRING" id="344609.SbBS512_E3352"/>
<dbReference type="GeneID" id="93779071"/>
<dbReference type="KEGG" id="sbc:SbBS512_E3352"/>
<dbReference type="HOGENOM" id="CLU_030140_0_2_6"/>
<dbReference type="UniPathway" id="UPA00244">
    <property type="reaction ID" value="UER00309"/>
</dbReference>
<dbReference type="Proteomes" id="UP000001030">
    <property type="component" value="Chromosome"/>
</dbReference>
<dbReference type="GO" id="GO:0005737">
    <property type="term" value="C:cytoplasm"/>
    <property type="evidence" value="ECO:0007669"/>
    <property type="project" value="UniProtKB-SubCell"/>
</dbReference>
<dbReference type="GO" id="GO:0048001">
    <property type="term" value="F:erythrose-4-phosphate dehydrogenase activity"/>
    <property type="evidence" value="ECO:0007669"/>
    <property type="project" value="UniProtKB-UniRule"/>
</dbReference>
<dbReference type="GO" id="GO:0051287">
    <property type="term" value="F:NAD binding"/>
    <property type="evidence" value="ECO:0007669"/>
    <property type="project" value="InterPro"/>
</dbReference>
<dbReference type="GO" id="GO:0042823">
    <property type="term" value="P:pyridoxal phosphate biosynthetic process"/>
    <property type="evidence" value="ECO:0007669"/>
    <property type="project" value="UniProtKB-UniRule"/>
</dbReference>
<dbReference type="GO" id="GO:0008615">
    <property type="term" value="P:pyridoxine biosynthetic process"/>
    <property type="evidence" value="ECO:0007669"/>
    <property type="project" value="UniProtKB-UniRule"/>
</dbReference>
<dbReference type="CDD" id="cd23937">
    <property type="entry name" value="GAPDH_C_E4PDH"/>
    <property type="match status" value="1"/>
</dbReference>
<dbReference type="CDD" id="cd17892">
    <property type="entry name" value="GAPDH_N_E4PDH"/>
    <property type="match status" value="1"/>
</dbReference>
<dbReference type="FunFam" id="3.30.360.10:FF:000007">
    <property type="entry name" value="D-erythrose-4-phosphate dehydrogenase"/>
    <property type="match status" value="1"/>
</dbReference>
<dbReference type="FunFam" id="3.40.50.720:FF:000001">
    <property type="entry name" value="Glyceraldehyde-3-phosphate dehydrogenase"/>
    <property type="match status" value="1"/>
</dbReference>
<dbReference type="Gene3D" id="3.30.360.10">
    <property type="entry name" value="Dihydrodipicolinate Reductase, domain 2"/>
    <property type="match status" value="1"/>
</dbReference>
<dbReference type="Gene3D" id="3.40.50.720">
    <property type="entry name" value="NAD(P)-binding Rossmann-like Domain"/>
    <property type="match status" value="1"/>
</dbReference>
<dbReference type="HAMAP" id="MF_01640">
    <property type="entry name" value="E4P_dehydrog"/>
    <property type="match status" value="1"/>
</dbReference>
<dbReference type="InterPro" id="IPR006422">
    <property type="entry name" value="E4P_DH_bac"/>
</dbReference>
<dbReference type="InterPro" id="IPR020831">
    <property type="entry name" value="GlycerAld/Erythrose_P_DH"/>
</dbReference>
<dbReference type="InterPro" id="IPR020830">
    <property type="entry name" value="GlycerAld_3-P_DH_AS"/>
</dbReference>
<dbReference type="InterPro" id="IPR020829">
    <property type="entry name" value="GlycerAld_3-P_DH_cat"/>
</dbReference>
<dbReference type="InterPro" id="IPR020828">
    <property type="entry name" value="GlycerAld_3-P_DH_NAD(P)-bd"/>
</dbReference>
<dbReference type="InterPro" id="IPR036291">
    <property type="entry name" value="NAD(P)-bd_dom_sf"/>
</dbReference>
<dbReference type="NCBIfam" id="TIGR01532">
    <property type="entry name" value="E4PD_g-proteo"/>
    <property type="match status" value="1"/>
</dbReference>
<dbReference type="NCBIfam" id="NF010058">
    <property type="entry name" value="PRK13535.1"/>
    <property type="match status" value="1"/>
</dbReference>
<dbReference type="PANTHER" id="PTHR43148">
    <property type="entry name" value="GLYCERALDEHYDE-3-PHOSPHATE DEHYDROGENASE 2"/>
    <property type="match status" value="1"/>
</dbReference>
<dbReference type="Pfam" id="PF02800">
    <property type="entry name" value="Gp_dh_C"/>
    <property type="match status" value="1"/>
</dbReference>
<dbReference type="Pfam" id="PF00044">
    <property type="entry name" value="Gp_dh_N"/>
    <property type="match status" value="1"/>
</dbReference>
<dbReference type="PIRSF" id="PIRSF000149">
    <property type="entry name" value="GAP_DH"/>
    <property type="match status" value="1"/>
</dbReference>
<dbReference type="PRINTS" id="PR00078">
    <property type="entry name" value="G3PDHDRGNASE"/>
</dbReference>
<dbReference type="SMART" id="SM00846">
    <property type="entry name" value="Gp_dh_N"/>
    <property type="match status" value="1"/>
</dbReference>
<dbReference type="SUPFAM" id="SSF55347">
    <property type="entry name" value="Glyceraldehyde-3-phosphate dehydrogenase-like, C-terminal domain"/>
    <property type="match status" value="1"/>
</dbReference>
<dbReference type="SUPFAM" id="SSF51735">
    <property type="entry name" value="NAD(P)-binding Rossmann-fold domains"/>
    <property type="match status" value="1"/>
</dbReference>
<dbReference type="PROSITE" id="PS00071">
    <property type="entry name" value="GAPDH"/>
    <property type="match status" value="1"/>
</dbReference>
<proteinExistence type="inferred from homology"/>
<accession>B2U0U3</accession>